<proteinExistence type="inferred from homology"/>
<protein>
    <recommendedName>
        <fullName evidence="1">2-C-methyl-D-erythritol 2,4-cyclodiphosphate synthase</fullName>
        <shortName evidence="1">MECDP-synthase</shortName>
        <shortName evidence="1">MECPP-synthase</shortName>
        <shortName evidence="1">MECPS</shortName>
        <ecNumber evidence="1">4.6.1.12</ecNumber>
    </recommendedName>
</protein>
<reference key="1">
    <citation type="journal article" date="2008" name="J. Bacteriol.">
        <title>Complete genome sequence of uropathogenic Proteus mirabilis, a master of both adherence and motility.</title>
        <authorList>
            <person name="Pearson M.M."/>
            <person name="Sebaihia M."/>
            <person name="Churcher C."/>
            <person name="Quail M.A."/>
            <person name="Seshasayee A.S."/>
            <person name="Luscombe N.M."/>
            <person name="Abdellah Z."/>
            <person name="Arrosmith C."/>
            <person name="Atkin B."/>
            <person name="Chillingworth T."/>
            <person name="Hauser H."/>
            <person name="Jagels K."/>
            <person name="Moule S."/>
            <person name="Mungall K."/>
            <person name="Norbertczak H."/>
            <person name="Rabbinowitsch E."/>
            <person name="Walker D."/>
            <person name="Whithead S."/>
            <person name="Thomson N.R."/>
            <person name="Rather P.N."/>
            <person name="Parkhill J."/>
            <person name="Mobley H.L.T."/>
        </authorList>
    </citation>
    <scope>NUCLEOTIDE SEQUENCE [LARGE SCALE GENOMIC DNA]</scope>
    <source>
        <strain>HI4320</strain>
    </source>
</reference>
<keyword id="KW-0414">Isoprene biosynthesis</keyword>
<keyword id="KW-0456">Lyase</keyword>
<keyword id="KW-0479">Metal-binding</keyword>
<keyword id="KW-1185">Reference proteome</keyword>
<gene>
    <name evidence="1" type="primary">ispF</name>
    <name type="ordered locus">PMI2241</name>
</gene>
<evidence type="ECO:0000255" key="1">
    <source>
        <dbReference type="HAMAP-Rule" id="MF_00107"/>
    </source>
</evidence>
<sequence length="160" mass="17170">MRIGHGYDVHKFGGEGPIIIGGVRIPYEQGLLAHSDGDVVLHAVTDAILGAVAMGDIGTLFPDTDPAYKGADSRVLLREAFSRVMAKGYRIGNLDVTIIAQAPKMLPHTPQMRVNIAEDLHCHVDDINVKATTTEKLGFVGRKEGIACEAVVLLIKESLS</sequence>
<name>ISPF_PROMH</name>
<organism>
    <name type="scientific">Proteus mirabilis (strain HI4320)</name>
    <dbReference type="NCBI Taxonomy" id="529507"/>
    <lineage>
        <taxon>Bacteria</taxon>
        <taxon>Pseudomonadati</taxon>
        <taxon>Pseudomonadota</taxon>
        <taxon>Gammaproteobacteria</taxon>
        <taxon>Enterobacterales</taxon>
        <taxon>Morganellaceae</taxon>
        <taxon>Proteus</taxon>
    </lineage>
</organism>
<accession>B4F226</accession>
<comment type="function">
    <text evidence="1">Involved in the biosynthesis of isopentenyl diphosphate (IPP) and dimethylallyl diphosphate (DMAPP), two major building blocks of isoprenoid compounds. Catalyzes the conversion of 4-diphosphocytidyl-2-C-methyl-D-erythritol 2-phosphate (CDP-ME2P) to 2-C-methyl-D-erythritol 2,4-cyclodiphosphate (ME-CPP) with a corresponding release of cytidine 5-monophosphate (CMP).</text>
</comment>
<comment type="catalytic activity">
    <reaction evidence="1">
        <text>4-CDP-2-C-methyl-D-erythritol 2-phosphate = 2-C-methyl-D-erythritol 2,4-cyclic diphosphate + CMP</text>
        <dbReference type="Rhea" id="RHEA:23864"/>
        <dbReference type="ChEBI" id="CHEBI:57919"/>
        <dbReference type="ChEBI" id="CHEBI:58483"/>
        <dbReference type="ChEBI" id="CHEBI:60377"/>
        <dbReference type="EC" id="4.6.1.12"/>
    </reaction>
</comment>
<comment type="cofactor">
    <cofactor evidence="1">
        <name>a divalent metal cation</name>
        <dbReference type="ChEBI" id="CHEBI:60240"/>
    </cofactor>
    <text evidence="1">Binds 1 divalent metal cation per subunit.</text>
</comment>
<comment type="pathway">
    <text evidence="1">Isoprenoid biosynthesis; isopentenyl diphosphate biosynthesis via DXP pathway; isopentenyl diphosphate from 1-deoxy-D-xylulose 5-phosphate: step 4/6.</text>
</comment>
<comment type="subunit">
    <text evidence="1">Homotrimer.</text>
</comment>
<comment type="similarity">
    <text evidence="1">Belongs to the IspF family.</text>
</comment>
<dbReference type="EC" id="4.6.1.12" evidence="1"/>
<dbReference type="EMBL" id="AM942759">
    <property type="protein sequence ID" value="CAR44450.1"/>
    <property type="molecule type" value="Genomic_DNA"/>
</dbReference>
<dbReference type="RefSeq" id="WP_004248690.1">
    <property type="nucleotide sequence ID" value="NC_010554.1"/>
</dbReference>
<dbReference type="SMR" id="B4F226"/>
<dbReference type="EnsemblBacteria" id="CAR44450">
    <property type="protein sequence ID" value="CAR44450"/>
    <property type="gene ID" value="PMI2241"/>
</dbReference>
<dbReference type="GeneID" id="6801912"/>
<dbReference type="KEGG" id="pmr:PMI2241"/>
<dbReference type="eggNOG" id="COG0245">
    <property type="taxonomic scope" value="Bacteria"/>
</dbReference>
<dbReference type="HOGENOM" id="CLU_084630_2_0_6"/>
<dbReference type="UniPathway" id="UPA00056">
    <property type="reaction ID" value="UER00095"/>
</dbReference>
<dbReference type="Proteomes" id="UP000008319">
    <property type="component" value="Chromosome"/>
</dbReference>
<dbReference type="GO" id="GO:0008685">
    <property type="term" value="F:2-C-methyl-D-erythritol 2,4-cyclodiphosphate synthase activity"/>
    <property type="evidence" value="ECO:0007669"/>
    <property type="project" value="UniProtKB-UniRule"/>
</dbReference>
<dbReference type="GO" id="GO:0046872">
    <property type="term" value="F:metal ion binding"/>
    <property type="evidence" value="ECO:0007669"/>
    <property type="project" value="UniProtKB-KW"/>
</dbReference>
<dbReference type="GO" id="GO:0019288">
    <property type="term" value="P:isopentenyl diphosphate biosynthetic process, methylerythritol 4-phosphate pathway"/>
    <property type="evidence" value="ECO:0007669"/>
    <property type="project" value="UniProtKB-UniRule"/>
</dbReference>
<dbReference type="GO" id="GO:0016114">
    <property type="term" value="P:terpenoid biosynthetic process"/>
    <property type="evidence" value="ECO:0007669"/>
    <property type="project" value="InterPro"/>
</dbReference>
<dbReference type="CDD" id="cd00554">
    <property type="entry name" value="MECDP_synthase"/>
    <property type="match status" value="1"/>
</dbReference>
<dbReference type="FunFam" id="3.30.1330.50:FF:000001">
    <property type="entry name" value="2-C-methyl-D-erythritol 2,4-cyclodiphosphate synthase"/>
    <property type="match status" value="1"/>
</dbReference>
<dbReference type="Gene3D" id="3.30.1330.50">
    <property type="entry name" value="2-C-methyl-D-erythritol 2,4-cyclodiphosphate synthase"/>
    <property type="match status" value="1"/>
</dbReference>
<dbReference type="HAMAP" id="MF_00107">
    <property type="entry name" value="IspF"/>
    <property type="match status" value="1"/>
</dbReference>
<dbReference type="InterPro" id="IPR003526">
    <property type="entry name" value="MECDP_synthase"/>
</dbReference>
<dbReference type="InterPro" id="IPR020555">
    <property type="entry name" value="MECDP_synthase_CS"/>
</dbReference>
<dbReference type="InterPro" id="IPR036571">
    <property type="entry name" value="MECDP_synthase_sf"/>
</dbReference>
<dbReference type="NCBIfam" id="TIGR00151">
    <property type="entry name" value="ispF"/>
    <property type="match status" value="1"/>
</dbReference>
<dbReference type="PANTHER" id="PTHR43181">
    <property type="entry name" value="2-C-METHYL-D-ERYTHRITOL 2,4-CYCLODIPHOSPHATE SYNTHASE, CHLOROPLASTIC"/>
    <property type="match status" value="1"/>
</dbReference>
<dbReference type="PANTHER" id="PTHR43181:SF1">
    <property type="entry name" value="2-C-METHYL-D-ERYTHRITOL 2,4-CYCLODIPHOSPHATE SYNTHASE, CHLOROPLASTIC"/>
    <property type="match status" value="1"/>
</dbReference>
<dbReference type="Pfam" id="PF02542">
    <property type="entry name" value="YgbB"/>
    <property type="match status" value="1"/>
</dbReference>
<dbReference type="SUPFAM" id="SSF69765">
    <property type="entry name" value="IpsF-like"/>
    <property type="match status" value="1"/>
</dbReference>
<dbReference type="PROSITE" id="PS01350">
    <property type="entry name" value="ISPF"/>
    <property type="match status" value="1"/>
</dbReference>
<feature type="chain" id="PRO_1000094280" description="2-C-methyl-D-erythritol 2,4-cyclodiphosphate synthase">
    <location>
        <begin position="1"/>
        <end position="160"/>
    </location>
</feature>
<feature type="binding site" evidence="1">
    <location>
        <begin position="8"/>
        <end position="10"/>
    </location>
    <ligand>
        <name>4-CDP-2-C-methyl-D-erythritol 2-phosphate</name>
        <dbReference type="ChEBI" id="CHEBI:57919"/>
    </ligand>
</feature>
<feature type="binding site" evidence="1">
    <location>
        <position position="8"/>
    </location>
    <ligand>
        <name>a divalent metal cation</name>
        <dbReference type="ChEBI" id="CHEBI:60240"/>
    </ligand>
</feature>
<feature type="binding site" evidence="1">
    <location>
        <position position="10"/>
    </location>
    <ligand>
        <name>a divalent metal cation</name>
        <dbReference type="ChEBI" id="CHEBI:60240"/>
    </ligand>
</feature>
<feature type="binding site" evidence="1">
    <location>
        <begin position="34"/>
        <end position="35"/>
    </location>
    <ligand>
        <name>4-CDP-2-C-methyl-D-erythritol 2-phosphate</name>
        <dbReference type="ChEBI" id="CHEBI:57919"/>
    </ligand>
</feature>
<feature type="binding site" evidence="1">
    <location>
        <position position="42"/>
    </location>
    <ligand>
        <name>a divalent metal cation</name>
        <dbReference type="ChEBI" id="CHEBI:60240"/>
    </ligand>
</feature>
<feature type="binding site" evidence="1">
    <location>
        <begin position="56"/>
        <end position="58"/>
    </location>
    <ligand>
        <name>4-CDP-2-C-methyl-D-erythritol 2-phosphate</name>
        <dbReference type="ChEBI" id="CHEBI:57919"/>
    </ligand>
</feature>
<feature type="binding site" evidence="1">
    <location>
        <begin position="61"/>
        <end position="65"/>
    </location>
    <ligand>
        <name>4-CDP-2-C-methyl-D-erythritol 2-phosphate</name>
        <dbReference type="ChEBI" id="CHEBI:57919"/>
    </ligand>
</feature>
<feature type="binding site" evidence="1">
    <location>
        <begin position="100"/>
        <end position="106"/>
    </location>
    <ligand>
        <name>4-CDP-2-C-methyl-D-erythritol 2-phosphate</name>
        <dbReference type="ChEBI" id="CHEBI:57919"/>
    </ligand>
</feature>
<feature type="binding site" evidence="1">
    <location>
        <begin position="132"/>
        <end position="135"/>
    </location>
    <ligand>
        <name>4-CDP-2-C-methyl-D-erythritol 2-phosphate</name>
        <dbReference type="ChEBI" id="CHEBI:57919"/>
    </ligand>
</feature>
<feature type="binding site" evidence="1">
    <location>
        <position position="139"/>
    </location>
    <ligand>
        <name>4-CDP-2-C-methyl-D-erythritol 2-phosphate</name>
        <dbReference type="ChEBI" id="CHEBI:57919"/>
    </ligand>
</feature>
<feature type="binding site" evidence="1">
    <location>
        <position position="142"/>
    </location>
    <ligand>
        <name>4-CDP-2-C-methyl-D-erythritol 2-phosphate</name>
        <dbReference type="ChEBI" id="CHEBI:57919"/>
    </ligand>
</feature>
<feature type="site" description="Transition state stabilizer" evidence="1">
    <location>
        <position position="34"/>
    </location>
</feature>
<feature type="site" description="Transition state stabilizer" evidence="1">
    <location>
        <position position="133"/>
    </location>
</feature>